<accession>B8G6P7</accession>
<feature type="chain" id="PRO_1000184009" description="Large ribosomal subunit protein bL17">
    <location>
        <begin position="1"/>
        <end position="116"/>
    </location>
</feature>
<dbReference type="EMBL" id="CP001337">
    <property type="protein sequence ID" value="ACL25856.1"/>
    <property type="molecule type" value="Genomic_DNA"/>
</dbReference>
<dbReference type="RefSeq" id="WP_015941712.1">
    <property type="nucleotide sequence ID" value="NC_011831.1"/>
</dbReference>
<dbReference type="SMR" id="B8G6P7"/>
<dbReference type="STRING" id="326427.Cagg_2996"/>
<dbReference type="KEGG" id="cag:Cagg_2996"/>
<dbReference type="eggNOG" id="COG0203">
    <property type="taxonomic scope" value="Bacteria"/>
</dbReference>
<dbReference type="HOGENOM" id="CLU_074407_2_0_0"/>
<dbReference type="OrthoDB" id="9809073at2"/>
<dbReference type="Proteomes" id="UP000002508">
    <property type="component" value="Chromosome"/>
</dbReference>
<dbReference type="GO" id="GO:0022625">
    <property type="term" value="C:cytosolic large ribosomal subunit"/>
    <property type="evidence" value="ECO:0007669"/>
    <property type="project" value="TreeGrafter"/>
</dbReference>
<dbReference type="GO" id="GO:0003735">
    <property type="term" value="F:structural constituent of ribosome"/>
    <property type="evidence" value="ECO:0007669"/>
    <property type="project" value="InterPro"/>
</dbReference>
<dbReference type="GO" id="GO:0006412">
    <property type="term" value="P:translation"/>
    <property type="evidence" value="ECO:0007669"/>
    <property type="project" value="UniProtKB-UniRule"/>
</dbReference>
<dbReference type="FunFam" id="3.90.1030.10:FF:000017">
    <property type="entry name" value="50S ribosomal protein L17"/>
    <property type="match status" value="1"/>
</dbReference>
<dbReference type="Gene3D" id="3.90.1030.10">
    <property type="entry name" value="Ribosomal protein L17"/>
    <property type="match status" value="1"/>
</dbReference>
<dbReference type="HAMAP" id="MF_01368">
    <property type="entry name" value="Ribosomal_bL17"/>
    <property type="match status" value="1"/>
</dbReference>
<dbReference type="InterPro" id="IPR000456">
    <property type="entry name" value="Ribosomal_bL17"/>
</dbReference>
<dbReference type="InterPro" id="IPR036373">
    <property type="entry name" value="Ribosomal_bL17_sf"/>
</dbReference>
<dbReference type="NCBIfam" id="TIGR00059">
    <property type="entry name" value="L17"/>
    <property type="match status" value="1"/>
</dbReference>
<dbReference type="PANTHER" id="PTHR14413:SF16">
    <property type="entry name" value="LARGE RIBOSOMAL SUBUNIT PROTEIN BL17M"/>
    <property type="match status" value="1"/>
</dbReference>
<dbReference type="PANTHER" id="PTHR14413">
    <property type="entry name" value="RIBOSOMAL PROTEIN L17"/>
    <property type="match status" value="1"/>
</dbReference>
<dbReference type="Pfam" id="PF01196">
    <property type="entry name" value="Ribosomal_L17"/>
    <property type="match status" value="1"/>
</dbReference>
<dbReference type="SUPFAM" id="SSF64263">
    <property type="entry name" value="Prokaryotic ribosomal protein L17"/>
    <property type="match status" value="1"/>
</dbReference>
<name>RL17_CHLAD</name>
<evidence type="ECO:0000255" key="1">
    <source>
        <dbReference type="HAMAP-Rule" id="MF_01368"/>
    </source>
</evidence>
<evidence type="ECO:0000305" key="2"/>
<gene>
    <name evidence="1" type="primary">rplQ</name>
    <name type="ordered locus">Cagg_2996</name>
</gene>
<proteinExistence type="inferred from homology"/>
<sequence>MRHRHAGKLLGRSYEHRKALYRNLMIALIEHKKIKTTLAKARAVQPEIEHLISIAREDTPHARRMALSKLASKNAMRKLFTFAPTTYGGRNGGYTRITKLGPRRGDGAEMALIELI</sequence>
<organism>
    <name type="scientific">Chloroflexus aggregans (strain MD-66 / DSM 9485)</name>
    <dbReference type="NCBI Taxonomy" id="326427"/>
    <lineage>
        <taxon>Bacteria</taxon>
        <taxon>Bacillati</taxon>
        <taxon>Chloroflexota</taxon>
        <taxon>Chloroflexia</taxon>
        <taxon>Chloroflexales</taxon>
        <taxon>Chloroflexineae</taxon>
        <taxon>Chloroflexaceae</taxon>
        <taxon>Chloroflexus</taxon>
    </lineage>
</organism>
<reference key="1">
    <citation type="submission" date="2008-12" db="EMBL/GenBank/DDBJ databases">
        <title>Complete sequence of Chloroflexus aggregans DSM 9485.</title>
        <authorList>
            <consortium name="US DOE Joint Genome Institute"/>
            <person name="Lucas S."/>
            <person name="Copeland A."/>
            <person name="Lapidus A."/>
            <person name="Glavina del Rio T."/>
            <person name="Dalin E."/>
            <person name="Tice H."/>
            <person name="Pitluck S."/>
            <person name="Foster B."/>
            <person name="Larimer F."/>
            <person name="Land M."/>
            <person name="Hauser L."/>
            <person name="Kyrpides N."/>
            <person name="Mikhailova N."/>
            <person name="Bryant D.A."/>
            <person name="Richardson P."/>
        </authorList>
    </citation>
    <scope>NUCLEOTIDE SEQUENCE [LARGE SCALE GENOMIC DNA]</scope>
    <source>
        <strain>MD-66 / DSM 9485</strain>
    </source>
</reference>
<comment type="subunit">
    <text evidence="1">Part of the 50S ribosomal subunit. Contacts protein L32.</text>
</comment>
<comment type="similarity">
    <text evidence="1">Belongs to the bacterial ribosomal protein bL17 family.</text>
</comment>
<keyword id="KW-0687">Ribonucleoprotein</keyword>
<keyword id="KW-0689">Ribosomal protein</keyword>
<protein>
    <recommendedName>
        <fullName evidence="1">Large ribosomal subunit protein bL17</fullName>
    </recommendedName>
    <alternativeName>
        <fullName evidence="2">50S ribosomal protein L17</fullName>
    </alternativeName>
</protein>